<sequence>MNKTIMALAIMMASFAANASVLPETPVPFKSGTGAIDNDTVYIGLGSAGTAWYKLDTQAKDKKWTALAAFPGGPREQATSAFIDGNLYVFGGIGKNSEGLTQVFNDVHKYNPKTNSWVKLMSHAPMGMAGHVTFVHNGKAYVTGGVNQNIFNGYFEDLNEAGKDSTAIDKINAHYFDKKAEDYFFNKFLLSFDPSTQQWSYAGESPWYGTAGAAVVNKGDKTWLINGEAKPGLRTDAVFELDFTGNNLKWNKLDPVSSPDGVAGGFAGISNDSLIFAGGAGFKGSRENYQNGKNYAHEGLKKSYSTDIHLWHNGKWDKSGELSQGRAYGVSLPWNNSLLIIGGETAGGKAVTDSVLISVKDNKVTVQN</sequence>
<name>NANM_SHIF8</name>
<organism>
    <name type="scientific">Shigella flexneri serotype 5b (strain 8401)</name>
    <dbReference type="NCBI Taxonomy" id="373384"/>
    <lineage>
        <taxon>Bacteria</taxon>
        <taxon>Pseudomonadati</taxon>
        <taxon>Pseudomonadota</taxon>
        <taxon>Gammaproteobacteria</taxon>
        <taxon>Enterobacterales</taxon>
        <taxon>Enterobacteriaceae</taxon>
        <taxon>Shigella</taxon>
    </lineage>
</organism>
<feature type="signal peptide" evidence="1">
    <location>
        <begin position="1"/>
        <end position="19"/>
    </location>
</feature>
<feature type="chain" id="PRO_0000333071" description="N-acetylneuraminate epimerase">
    <location>
        <begin position="20"/>
        <end position="368"/>
    </location>
</feature>
<feature type="repeat" description="Kelch 1">
    <location>
        <begin position="40"/>
        <end position="84"/>
    </location>
</feature>
<feature type="repeat" description="Kelch 2">
    <location>
        <begin position="86"/>
        <end position="137"/>
    </location>
</feature>
<feature type="repeat" description="Kelch 3">
    <location>
        <begin position="139"/>
        <end position="173"/>
    </location>
</feature>
<feature type="repeat" description="Kelch 4">
    <location>
        <begin position="174"/>
        <end position="219"/>
    </location>
</feature>
<feature type="repeat" description="Kelch 5">
    <location>
        <begin position="222"/>
        <end position="265"/>
    </location>
</feature>
<feature type="repeat" description="Kelch 6">
    <location>
        <begin position="287"/>
        <end position="336"/>
    </location>
</feature>
<feature type="repeat" description="Kelch 7">
    <location>
        <begin position="338"/>
        <end position="367"/>
    </location>
</feature>
<feature type="active site" description="Proton acceptor" evidence="1">
    <location>
        <position position="228"/>
    </location>
</feature>
<keyword id="KW-0119">Carbohydrate metabolism</keyword>
<keyword id="KW-0413">Isomerase</keyword>
<keyword id="KW-0880">Kelch repeat</keyword>
<keyword id="KW-0574">Periplasm</keyword>
<keyword id="KW-0677">Repeat</keyword>
<keyword id="KW-0732">Signal</keyword>
<protein>
    <recommendedName>
        <fullName evidence="1">N-acetylneuraminate epimerase</fullName>
        <ecNumber evidence="1">5.1.3.24</ecNumber>
    </recommendedName>
    <alternativeName>
        <fullName evidence="1">N-acetylneuraminate mutarotase</fullName>
        <shortName evidence="1">Neu5Ac mutarotase</shortName>
    </alternativeName>
    <alternativeName>
        <fullName evidence="1">Sialic acid epimerase</fullName>
    </alternativeName>
</protein>
<gene>
    <name evidence="1" type="primary">nanM</name>
    <name type="ordered locus">SFV_4217</name>
</gene>
<dbReference type="EC" id="5.1.3.24" evidence="1"/>
<dbReference type="EMBL" id="CP000266">
    <property type="protein sequence ID" value="ABF06200.1"/>
    <property type="status" value="ALT_INIT"/>
    <property type="molecule type" value="Genomic_DNA"/>
</dbReference>
<dbReference type="RefSeq" id="WP_005048917.1">
    <property type="nucleotide sequence ID" value="NC_008258.1"/>
</dbReference>
<dbReference type="SMR" id="Q0SXL5"/>
<dbReference type="KEGG" id="sfv:SFV_4217"/>
<dbReference type="HOGENOM" id="CLU_061535_0_0_6"/>
<dbReference type="Proteomes" id="UP000000659">
    <property type="component" value="Chromosome"/>
</dbReference>
<dbReference type="GO" id="GO:0042597">
    <property type="term" value="C:periplasmic space"/>
    <property type="evidence" value="ECO:0007669"/>
    <property type="project" value="UniProtKB-SubCell"/>
</dbReference>
<dbReference type="GO" id="GO:0016857">
    <property type="term" value="F:racemase and epimerase activity, acting on carbohydrates and derivatives"/>
    <property type="evidence" value="ECO:0007669"/>
    <property type="project" value="UniProtKB-UniRule"/>
</dbReference>
<dbReference type="FunFam" id="2.120.10.80:FF:000061">
    <property type="entry name" value="N-acetylneuraminate epimerase"/>
    <property type="match status" value="1"/>
</dbReference>
<dbReference type="FunFam" id="2.120.10.80:FF:000067">
    <property type="entry name" value="N-acetylneuraminate epimerase"/>
    <property type="match status" value="1"/>
</dbReference>
<dbReference type="Gene3D" id="2.120.10.80">
    <property type="entry name" value="Kelch-type beta propeller"/>
    <property type="match status" value="2"/>
</dbReference>
<dbReference type="HAMAP" id="MF_01195">
    <property type="entry name" value="NanM"/>
    <property type="match status" value="1"/>
</dbReference>
<dbReference type="InterPro" id="IPR015915">
    <property type="entry name" value="Kelch-typ_b-propeller"/>
</dbReference>
<dbReference type="InterPro" id="IPR056734">
    <property type="entry name" value="NANM"/>
</dbReference>
<dbReference type="InterPro" id="IPR019936">
    <property type="entry name" value="NanM_proteobact"/>
</dbReference>
<dbReference type="NCBIfam" id="TIGR03547">
    <property type="entry name" value="muta_rot_YjhT"/>
    <property type="match status" value="1"/>
</dbReference>
<dbReference type="NCBIfam" id="NF010730">
    <property type="entry name" value="PRK14131.1"/>
    <property type="match status" value="1"/>
</dbReference>
<dbReference type="PANTHER" id="PTHR45632:SF3">
    <property type="entry name" value="KELCH-LIKE PROTEIN 32"/>
    <property type="match status" value="1"/>
</dbReference>
<dbReference type="PANTHER" id="PTHR45632">
    <property type="entry name" value="LD33804P"/>
    <property type="match status" value="1"/>
</dbReference>
<dbReference type="Pfam" id="PF24996">
    <property type="entry name" value="NANM"/>
    <property type="match status" value="1"/>
</dbReference>
<dbReference type="SUPFAM" id="SSF117281">
    <property type="entry name" value="Kelch motif"/>
    <property type="match status" value="1"/>
</dbReference>
<evidence type="ECO:0000255" key="1">
    <source>
        <dbReference type="HAMAP-Rule" id="MF_01195"/>
    </source>
</evidence>
<evidence type="ECO:0000305" key="2"/>
<comment type="function">
    <text evidence="1">Converts alpha-N-acetylneuranimic acid (Neu5Ac) to the beta-anomer, accelerating the equilibrium between the alpha- and beta-anomers. Probably facilitates sialidase-negative bacteria to compete successfully for limited amounts of extracellular Neu5Ac, which is likely taken up in the beta-anomer. In addition, the rapid removal of sialic acid from solution might be advantageous to the bacterium to damp down host responses.</text>
</comment>
<comment type="catalytic activity">
    <reaction evidence="1">
        <text>N-acetyl-alpha-neuraminate = N-acetyl-beta-neuraminate</text>
        <dbReference type="Rhea" id="RHEA:25233"/>
        <dbReference type="ChEBI" id="CHEBI:58705"/>
        <dbReference type="ChEBI" id="CHEBI:58770"/>
        <dbReference type="EC" id="5.1.3.24"/>
    </reaction>
</comment>
<comment type="subunit">
    <text evidence="1">Homodimer.</text>
</comment>
<comment type="subcellular location">
    <subcellularLocation>
        <location evidence="1">Periplasm</location>
    </subcellularLocation>
</comment>
<comment type="similarity">
    <text evidence="1">Belongs to the NanM family.</text>
</comment>
<comment type="sequence caution" evidence="2">
    <conflict type="erroneous initiation">
        <sequence resource="EMBL-CDS" id="ABF06200"/>
    </conflict>
</comment>
<proteinExistence type="inferred from homology"/>
<accession>Q0SXL5</accession>
<reference key="1">
    <citation type="journal article" date="2006" name="BMC Genomics">
        <title>Complete genome sequence of Shigella flexneri 5b and comparison with Shigella flexneri 2a.</title>
        <authorList>
            <person name="Nie H."/>
            <person name="Yang F."/>
            <person name="Zhang X."/>
            <person name="Yang J."/>
            <person name="Chen L."/>
            <person name="Wang J."/>
            <person name="Xiong Z."/>
            <person name="Peng J."/>
            <person name="Sun L."/>
            <person name="Dong J."/>
            <person name="Xue Y."/>
            <person name="Xu X."/>
            <person name="Chen S."/>
            <person name="Yao Z."/>
            <person name="Shen Y."/>
            <person name="Jin Q."/>
        </authorList>
    </citation>
    <scope>NUCLEOTIDE SEQUENCE [LARGE SCALE GENOMIC DNA]</scope>
    <source>
        <strain>8401</strain>
    </source>
</reference>